<evidence type="ECO:0000255" key="1">
    <source>
        <dbReference type="HAMAP-Rule" id="MF_01694"/>
    </source>
</evidence>
<evidence type="ECO:0000255" key="2">
    <source>
        <dbReference type="PROSITE-ProRule" id="PRU01266"/>
    </source>
</evidence>
<accession>Q87F85</accession>
<feature type="chain" id="PRO_0000381718" description="Biotin synthase">
    <location>
        <begin position="1"/>
        <end position="341"/>
    </location>
</feature>
<feature type="domain" description="Radical SAM core" evidence="2">
    <location>
        <begin position="40"/>
        <end position="267"/>
    </location>
</feature>
<feature type="binding site" evidence="1">
    <location>
        <position position="55"/>
    </location>
    <ligand>
        <name>[4Fe-4S] cluster</name>
        <dbReference type="ChEBI" id="CHEBI:49883"/>
        <note>4Fe-4S-S-AdoMet</note>
    </ligand>
</feature>
<feature type="binding site" evidence="1">
    <location>
        <position position="59"/>
    </location>
    <ligand>
        <name>[4Fe-4S] cluster</name>
        <dbReference type="ChEBI" id="CHEBI:49883"/>
        <note>4Fe-4S-S-AdoMet</note>
    </ligand>
</feature>
<feature type="binding site" evidence="1">
    <location>
        <position position="62"/>
    </location>
    <ligand>
        <name>[4Fe-4S] cluster</name>
        <dbReference type="ChEBI" id="CHEBI:49883"/>
        <note>4Fe-4S-S-AdoMet</note>
    </ligand>
</feature>
<feature type="binding site" evidence="1">
    <location>
        <position position="99"/>
    </location>
    <ligand>
        <name>[2Fe-2S] cluster</name>
        <dbReference type="ChEBI" id="CHEBI:190135"/>
    </ligand>
</feature>
<feature type="binding site" evidence="1">
    <location>
        <position position="130"/>
    </location>
    <ligand>
        <name>[2Fe-2S] cluster</name>
        <dbReference type="ChEBI" id="CHEBI:190135"/>
    </ligand>
</feature>
<feature type="binding site" evidence="1">
    <location>
        <position position="190"/>
    </location>
    <ligand>
        <name>[2Fe-2S] cluster</name>
        <dbReference type="ChEBI" id="CHEBI:190135"/>
    </ligand>
</feature>
<feature type="binding site" evidence="1">
    <location>
        <position position="262"/>
    </location>
    <ligand>
        <name>[2Fe-2S] cluster</name>
        <dbReference type="ChEBI" id="CHEBI:190135"/>
    </ligand>
</feature>
<dbReference type="EC" id="2.8.1.6" evidence="1"/>
<dbReference type="EMBL" id="AE009442">
    <property type="protein sequence ID" value="AAO27950.1"/>
    <property type="molecule type" value="Genomic_DNA"/>
</dbReference>
<dbReference type="RefSeq" id="WP_004087148.1">
    <property type="nucleotide sequence ID" value="NC_004556.1"/>
</dbReference>
<dbReference type="SMR" id="Q87F85"/>
<dbReference type="GeneID" id="93903734"/>
<dbReference type="KEGG" id="xft:PD_0043"/>
<dbReference type="HOGENOM" id="CLU_033172_1_2_6"/>
<dbReference type="UniPathway" id="UPA00078">
    <property type="reaction ID" value="UER00162"/>
</dbReference>
<dbReference type="Proteomes" id="UP000002516">
    <property type="component" value="Chromosome"/>
</dbReference>
<dbReference type="GO" id="GO:0051537">
    <property type="term" value="F:2 iron, 2 sulfur cluster binding"/>
    <property type="evidence" value="ECO:0007669"/>
    <property type="project" value="UniProtKB-KW"/>
</dbReference>
<dbReference type="GO" id="GO:0051539">
    <property type="term" value="F:4 iron, 4 sulfur cluster binding"/>
    <property type="evidence" value="ECO:0007669"/>
    <property type="project" value="UniProtKB-KW"/>
</dbReference>
<dbReference type="GO" id="GO:0004076">
    <property type="term" value="F:biotin synthase activity"/>
    <property type="evidence" value="ECO:0007669"/>
    <property type="project" value="UniProtKB-UniRule"/>
</dbReference>
<dbReference type="GO" id="GO:0005506">
    <property type="term" value="F:iron ion binding"/>
    <property type="evidence" value="ECO:0007669"/>
    <property type="project" value="UniProtKB-UniRule"/>
</dbReference>
<dbReference type="GO" id="GO:0009102">
    <property type="term" value="P:biotin biosynthetic process"/>
    <property type="evidence" value="ECO:0007669"/>
    <property type="project" value="UniProtKB-UniRule"/>
</dbReference>
<dbReference type="CDD" id="cd01335">
    <property type="entry name" value="Radical_SAM"/>
    <property type="match status" value="1"/>
</dbReference>
<dbReference type="FunFam" id="3.20.20.70:FF:000011">
    <property type="entry name" value="Biotin synthase"/>
    <property type="match status" value="1"/>
</dbReference>
<dbReference type="Gene3D" id="3.20.20.70">
    <property type="entry name" value="Aldolase class I"/>
    <property type="match status" value="1"/>
</dbReference>
<dbReference type="HAMAP" id="MF_01694">
    <property type="entry name" value="BioB"/>
    <property type="match status" value="1"/>
</dbReference>
<dbReference type="InterPro" id="IPR013785">
    <property type="entry name" value="Aldolase_TIM"/>
</dbReference>
<dbReference type="InterPro" id="IPR010722">
    <property type="entry name" value="BATS_dom"/>
</dbReference>
<dbReference type="InterPro" id="IPR002684">
    <property type="entry name" value="Biotin_synth/BioAB"/>
</dbReference>
<dbReference type="InterPro" id="IPR024177">
    <property type="entry name" value="Biotin_synthase"/>
</dbReference>
<dbReference type="InterPro" id="IPR006638">
    <property type="entry name" value="Elp3/MiaA/NifB-like_rSAM"/>
</dbReference>
<dbReference type="InterPro" id="IPR007197">
    <property type="entry name" value="rSAM"/>
</dbReference>
<dbReference type="NCBIfam" id="TIGR00433">
    <property type="entry name" value="bioB"/>
    <property type="match status" value="1"/>
</dbReference>
<dbReference type="PANTHER" id="PTHR22976">
    <property type="entry name" value="BIOTIN SYNTHASE"/>
    <property type="match status" value="1"/>
</dbReference>
<dbReference type="PANTHER" id="PTHR22976:SF2">
    <property type="entry name" value="BIOTIN SYNTHASE, MITOCHONDRIAL"/>
    <property type="match status" value="1"/>
</dbReference>
<dbReference type="Pfam" id="PF06968">
    <property type="entry name" value="BATS"/>
    <property type="match status" value="1"/>
</dbReference>
<dbReference type="Pfam" id="PF04055">
    <property type="entry name" value="Radical_SAM"/>
    <property type="match status" value="1"/>
</dbReference>
<dbReference type="PIRSF" id="PIRSF001619">
    <property type="entry name" value="Biotin_synth"/>
    <property type="match status" value="1"/>
</dbReference>
<dbReference type="SFLD" id="SFLDG01060">
    <property type="entry name" value="BATS_domain_containing"/>
    <property type="match status" value="1"/>
</dbReference>
<dbReference type="SFLD" id="SFLDF00272">
    <property type="entry name" value="biotin_synthase"/>
    <property type="match status" value="1"/>
</dbReference>
<dbReference type="SMART" id="SM00876">
    <property type="entry name" value="BATS"/>
    <property type="match status" value="1"/>
</dbReference>
<dbReference type="SMART" id="SM00729">
    <property type="entry name" value="Elp3"/>
    <property type="match status" value="1"/>
</dbReference>
<dbReference type="SUPFAM" id="SSF102114">
    <property type="entry name" value="Radical SAM enzymes"/>
    <property type="match status" value="1"/>
</dbReference>
<dbReference type="PROSITE" id="PS51918">
    <property type="entry name" value="RADICAL_SAM"/>
    <property type="match status" value="1"/>
</dbReference>
<proteinExistence type="inferred from homology"/>
<organism>
    <name type="scientific">Xylella fastidiosa (strain Temecula1 / ATCC 700964)</name>
    <dbReference type="NCBI Taxonomy" id="183190"/>
    <lineage>
        <taxon>Bacteria</taxon>
        <taxon>Pseudomonadati</taxon>
        <taxon>Pseudomonadota</taxon>
        <taxon>Gammaproteobacteria</taxon>
        <taxon>Lysobacterales</taxon>
        <taxon>Lysobacteraceae</taxon>
        <taxon>Xylella</taxon>
    </lineage>
</organism>
<sequence>MSSIIRYDWTAEELHALFDLSLPELLYRAASVHRQHFDPAEIQVSTLLSVKTGGCPEDCSYCPQAQRYDTGVTAQKLMDVDAVVAKARQAKLAGASRFCMGAAWRSPKDRDIPKIASMIREVKALGLETCATLGMLNTCQAQALKDAGLDYYNHNVDTSPDFYDSVIHTRQYQDRLDTLAHVRDVGLKTCCGGIVGMGETRQHRVGLLLTLATLPAHPDSVPVNLLVQVAGTPLHGTQTLDPFEFVRMIAVARITMPRSMVRLSAGRESMSDELQLLCFMAGANSIFYGEKLLTTANPETERDQALFQRLGLRPMHLMENVSNKDQHHGNVHADIACKHVV</sequence>
<name>BIOB_XYLFT</name>
<gene>
    <name evidence="1" type="primary">bioB</name>
    <name type="ordered locus">PD_0043</name>
</gene>
<protein>
    <recommendedName>
        <fullName evidence="1">Biotin synthase</fullName>
        <ecNumber evidence="1">2.8.1.6</ecNumber>
    </recommendedName>
</protein>
<reference key="1">
    <citation type="journal article" date="2003" name="J. Bacteriol.">
        <title>Comparative analyses of the complete genome sequences of Pierce's disease and citrus variegated chlorosis strains of Xylella fastidiosa.</title>
        <authorList>
            <person name="Van Sluys M.A."/>
            <person name="de Oliveira M.C."/>
            <person name="Monteiro-Vitorello C.B."/>
            <person name="Miyaki C.Y."/>
            <person name="Furlan L.R."/>
            <person name="Camargo L.E.A."/>
            <person name="da Silva A.C.R."/>
            <person name="Moon D.H."/>
            <person name="Takita M.A."/>
            <person name="Lemos E.G.M."/>
            <person name="Machado M.A."/>
            <person name="Ferro M.I.T."/>
            <person name="da Silva F.R."/>
            <person name="Goldman M.H.S."/>
            <person name="Goldman G.H."/>
            <person name="Lemos M.V.F."/>
            <person name="El-Dorry H."/>
            <person name="Tsai S.M."/>
            <person name="Carrer H."/>
            <person name="Carraro D.M."/>
            <person name="de Oliveira R.C."/>
            <person name="Nunes L.R."/>
            <person name="Siqueira W.J."/>
            <person name="Coutinho L.L."/>
            <person name="Kimura E.T."/>
            <person name="Ferro E.S."/>
            <person name="Harakava R."/>
            <person name="Kuramae E.E."/>
            <person name="Marino C.L."/>
            <person name="Giglioti E."/>
            <person name="Abreu I.L."/>
            <person name="Alves L.M.C."/>
            <person name="do Amaral A.M."/>
            <person name="Baia G.S."/>
            <person name="Blanco S.R."/>
            <person name="Brito M.S."/>
            <person name="Cannavan F.S."/>
            <person name="Celestino A.V."/>
            <person name="da Cunha A.F."/>
            <person name="Fenille R.C."/>
            <person name="Ferro J.A."/>
            <person name="Formighieri E.F."/>
            <person name="Kishi L.T."/>
            <person name="Leoni S.G."/>
            <person name="Oliveira A.R."/>
            <person name="Rosa V.E. Jr."/>
            <person name="Sassaki F.T."/>
            <person name="Sena J.A.D."/>
            <person name="de Souza A.A."/>
            <person name="Truffi D."/>
            <person name="Tsukumo F."/>
            <person name="Yanai G.M."/>
            <person name="Zaros L.G."/>
            <person name="Civerolo E.L."/>
            <person name="Simpson A.J.G."/>
            <person name="Almeida N.F. Jr."/>
            <person name="Setubal J.C."/>
            <person name="Kitajima J.P."/>
        </authorList>
    </citation>
    <scope>NUCLEOTIDE SEQUENCE [LARGE SCALE GENOMIC DNA]</scope>
    <source>
        <strain>Temecula1 / ATCC 700964</strain>
    </source>
</reference>
<comment type="function">
    <text evidence="1">Catalyzes the conversion of dethiobiotin (DTB) to biotin by the insertion of a sulfur atom into dethiobiotin via a radical-based mechanism.</text>
</comment>
<comment type="catalytic activity">
    <reaction evidence="1">
        <text>(4R,5S)-dethiobiotin + (sulfur carrier)-SH + 2 reduced [2Fe-2S]-[ferredoxin] + 2 S-adenosyl-L-methionine = (sulfur carrier)-H + biotin + 2 5'-deoxyadenosine + 2 L-methionine + 2 oxidized [2Fe-2S]-[ferredoxin]</text>
        <dbReference type="Rhea" id="RHEA:22060"/>
        <dbReference type="Rhea" id="RHEA-COMP:10000"/>
        <dbReference type="Rhea" id="RHEA-COMP:10001"/>
        <dbReference type="Rhea" id="RHEA-COMP:14737"/>
        <dbReference type="Rhea" id="RHEA-COMP:14739"/>
        <dbReference type="ChEBI" id="CHEBI:17319"/>
        <dbReference type="ChEBI" id="CHEBI:29917"/>
        <dbReference type="ChEBI" id="CHEBI:33737"/>
        <dbReference type="ChEBI" id="CHEBI:33738"/>
        <dbReference type="ChEBI" id="CHEBI:57586"/>
        <dbReference type="ChEBI" id="CHEBI:57844"/>
        <dbReference type="ChEBI" id="CHEBI:59789"/>
        <dbReference type="ChEBI" id="CHEBI:64428"/>
        <dbReference type="ChEBI" id="CHEBI:149473"/>
        <dbReference type="EC" id="2.8.1.6"/>
    </reaction>
</comment>
<comment type="cofactor">
    <cofactor evidence="1">
        <name>[4Fe-4S] cluster</name>
        <dbReference type="ChEBI" id="CHEBI:49883"/>
    </cofactor>
    <text evidence="1">Binds 1 [4Fe-4S] cluster. The cluster is coordinated with 3 cysteines and an exchangeable S-adenosyl-L-methionine.</text>
</comment>
<comment type="cofactor">
    <cofactor evidence="1">
        <name>[2Fe-2S] cluster</name>
        <dbReference type="ChEBI" id="CHEBI:190135"/>
    </cofactor>
    <text evidence="1">Binds 1 [2Fe-2S] cluster. The cluster is coordinated with 3 cysteines and 1 arginine.</text>
</comment>
<comment type="pathway">
    <text evidence="1">Cofactor biosynthesis; biotin biosynthesis; biotin from 7,8-diaminononanoate: step 2/2.</text>
</comment>
<comment type="subunit">
    <text evidence="1">Homodimer.</text>
</comment>
<comment type="similarity">
    <text evidence="1">Belongs to the radical SAM superfamily. Biotin synthase family.</text>
</comment>
<keyword id="KW-0001">2Fe-2S</keyword>
<keyword id="KW-0004">4Fe-4S</keyword>
<keyword id="KW-0093">Biotin biosynthesis</keyword>
<keyword id="KW-0408">Iron</keyword>
<keyword id="KW-0411">Iron-sulfur</keyword>
<keyword id="KW-0479">Metal-binding</keyword>
<keyword id="KW-1185">Reference proteome</keyword>
<keyword id="KW-0949">S-adenosyl-L-methionine</keyword>
<keyword id="KW-0808">Transferase</keyword>